<evidence type="ECO:0000250" key="1"/>
<evidence type="ECO:0000305" key="2"/>
<keyword id="KW-0240">DNA-directed RNA polymerase</keyword>
<keyword id="KW-0548">Nucleotidyltransferase</keyword>
<keyword id="KW-1185">Reference proteome</keyword>
<keyword id="KW-0804">Transcription</keyword>
<keyword id="KW-0808">Transferase</keyword>
<protein>
    <recommendedName>
        <fullName>DNA-directed RNA polymerase subunit alpha</fullName>
        <shortName>RNAP subunit alpha</shortName>
        <ecNumber>2.7.7.6</ecNumber>
    </recommendedName>
    <alternativeName>
        <fullName>RNA polymerase subunit alpha</fullName>
    </alternativeName>
    <alternativeName>
        <fullName>Transcriptase subunit alpha</fullName>
    </alternativeName>
</protein>
<gene>
    <name type="primary">rpoA</name>
    <name type="ordered locus">R01380</name>
    <name type="ORF">SMc01285</name>
</gene>
<dbReference type="EC" id="2.7.7.6"/>
<dbReference type="EMBL" id="AF317474">
    <property type="protein sequence ID" value="AAL26901.1"/>
    <property type="molecule type" value="Genomic_DNA"/>
</dbReference>
<dbReference type="EMBL" id="AL591688">
    <property type="protein sequence ID" value="CAC45959.1"/>
    <property type="molecule type" value="Genomic_DNA"/>
</dbReference>
<dbReference type="RefSeq" id="NP_385486.1">
    <property type="nucleotide sequence ID" value="NC_003047.1"/>
</dbReference>
<dbReference type="RefSeq" id="WP_003536494.1">
    <property type="nucleotide sequence ID" value="NC_003047.1"/>
</dbReference>
<dbReference type="SMR" id="Q925Z2"/>
<dbReference type="EnsemblBacteria" id="CAC45959">
    <property type="protein sequence ID" value="CAC45959"/>
    <property type="gene ID" value="SMc01285"/>
</dbReference>
<dbReference type="KEGG" id="sme:SMc01285"/>
<dbReference type="PATRIC" id="fig|266834.11.peg.2797"/>
<dbReference type="eggNOG" id="COG0202">
    <property type="taxonomic scope" value="Bacteria"/>
</dbReference>
<dbReference type="HOGENOM" id="CLU_053084_0_0_5"/>
<dbReference type="OrthoDB" id="9805706at2"/>
<dbReference type="Proteomes" id="UP000001976">
    <property type="component" value="Chromosome"/>
</dbReference>
<dbReference type="GO" id="GO:0005737">
    <property type="term" value="C:cytoplasm"/>
    <property type="evidence" value="ECO:0007669"/>
    <property type="project" value="UniProtKB-ARBA"/>
</dbReference>
<dbReference type="GO" id="GO:0000428">
    <property type="term" value="C:DNA-directed RNA polymerase complex"/>
    <property type="evidence" value="ECO:0007669"/>
    <property type="project" value="UniProtKB-KW"/>
</dbReference>
<dbReference type="GO" id="GO:0003677">
    <property type="term" value="F:DNA binding"/>
    <property type="evidence" value="ECO:0007669"/>
    <property type="project" value="UniProtKB-UniRule"/>
</dbReference>
<dbReference type="GO" id="GO:0003899">
    <property type="term" value="F:DNA-directed RNA polymerase activity"/>
    <property type="evidence" value="ECO:0007669"/>
    <property type="project" value="UniProtKB-UniRule"/>
</dbReference>
<dbReference type="GO" id="GO:0046983">
    <property type="term" value="F:protein dimerization activity"/>
    <property type="evidence" value="ECO:0007669"/>
    <property type="project" value="InterPro"/>
</dbReference>
<dbReference type="GO" id="GO:0006351">
    <property type="term" value="P:DNA-templated transcription"/>
    <property type="evidence" value="ECO:0007669"/>
    <property type="project" value="UniProtKB-UniRule"/>
</dbReference>
<dbReference type="CDD" id="cd06928">
    <property type="entry name" value="RNAP_alpha_NTD"/>
    <property type="match status" value="1"/>
</dbReference>
<dbReference type="FunFam" id="1.10.150.20:FF:000001">
    <property type="entry name" value="DNA-directed RNA polymerase subunit alpha"/>
    <property type="match status" value="1"/>
</dbReference>
<dbReference type="FunFam" id="2.170.120.12:FF:000001">
    <property type="entry name" value="DNA-directed RNA polymerase subunit alpha"/>
    <property type="match status" value="1"/>
</dbReference>
<dbReference type="Gene3D" id="1.10.150.20">
    <property type="entry name" value="5' to 3' exonuclease, C-terminal subdomain"/>
    <property type="match status" value="1"/>
</dbReference>
<dbReference type="Gene3D" id="2.170.120.12">
    <property type="entry name" value="DNA-directed RNA polymerase, insert domain"/>
    <property type="match status" value="1"/>
</dbReference>
<dbReference type="Gene3D" id="3.30.1360.10">
    <property type="entry name" value="RNA polymerase, RBP11-like subunit"/>
    <property type="match status" value="1"/>
</dbReference>
<dbReference type="HAMAP" id="MF_00059">
    <property type="entry name" value="RNApol_bact_RpoA"/>
    <property type="match status" value="1"/>
</dbReference>
<dbReference type="InterPro" id="IPR011262">
    <property type="entry name" value="DNA-dir_RNA_pol_insert"/>
</dbReference>
<dbReference type="InterPro" id="IPR011263">
    <property type="entry name" value="DNA-dir_RNA_pol_RpoA/D/Rpb3"/>
</dbReference>
<dbReference type="InterPro" id="IPR011773">
    <property type="entry name" value="DNA-dir_RpoA"/>
</dbReference>
<dbReference type="InterPro" id="IPR036603">
    <property type="entry name" value="RBP11-like"/>
</dbReference>
<dbReference type="InterPro" id="IPR011260">
    <property type="entry name" value="RNAP_asu_C"/>
</dbReference>
<dbReference type="InterPro" id="IPR036643">
    <property type="entry name" value="RNApol_insert_sf"/>
</dbReference>
<dbReference type="NCBIfam" id="NF003513">
    <property type="entry name" value="PRK05182.1-2"/>
    <property type="match status" value="1"/>
</dbReference>
<dbReference type="NCBIfam" id="NF003519">
    <property type="entry name" value="PRK05182.2-5"/>
    <property type="match status" value="1"/>
</dbReference>
<dbReference type="NCBIfam" id="TIGR02027">
    <property type="entry name" value="rpoA"/>
    <property type="match status" value="1"/>
</dbReference>
<dbReference type="Pfam" id="PF01000">
    <property type="entry name" value="RNA_pol_A_bac"/>
    <property type="match status" value="1"/>
</dbReference>
<dbReference type="Pfam" id="PF03118">
    <property type="entry name" value="RNA_pol_A_CTD"/>
    <property type="match status" value="1"/>
</dbReference>
<dbReference type="Pfam" id="PF01193">
    <property type="entry name" value="RNA_pol_L"/>
    <property type="match status" value="1"/>
</dbReference>
<dbReference type="SMART" id="SM00662">
    <property type="entry name" value="RPOLD"/>
    <property type="match status" value="1"/>
</dbReference>
<dbReference type="SUPFAM" id="SSF47789">
    <property type="entry name" value="C-terminal domain of RNA polymerase alpha subunit"/>
    <property type="match status" value="1"/>
</dbReference>
<dbReference type="SUPFAM" id="SSF56553">
    <property type="entry name" value="Insert subdomain of RNA polymerase alpha subunit"/>
    <property type="match status" value="1"/>
</dbReference>
<dbReference type="SUPFAM" id="SSF55257">
    <property type="entry name" value="RBP11-like subunits of RNA polymerase"/>
    <property type="match status" value="1"/>
</dbReference>
<organism>
    <name type="scientific">Rhizobium meliloti (strain 1021)</name>
    <name type="common">Ensifer meliloti</name>
    <name type="synonym">Sinorhizobium meliloti</name>
    <dbReference type="NCBI Taxonomy" id="266834"/>
    <lineage>
        <taxon>Bacteria</taxon>
        <taxon>Pseudomonadati</taxon>
        <taxon>Pseudomonadota</taxon>
        <taxon>Alphaproteobacteria</taxon>
        <taxon>Hyphomicrobiales</taxon>
        <taxon>Rhizobiaceae</taxon>
        <taxon>Sinorhizobium/Ensifer group</taxon>
        <taxon>Sinorhizobium</taxon>
    </lineage>
</organism>
<feature type="chain" id="PRO_0000175365" description="DNA-directed RNA polymerase subunit alpha">
    <location>
        <begin position="1"/>
        <end position="336"/>
    </location>
</feature>
<feature type="region of interest" description="Alpha N-terminal domain (alpha-NTD)" evidence="1">
    <location>
        <begin position="1"/>
        <end position="232"/>
    </location>
</feature>
<feature type="region of interest" description="Alpha C-terminal domain (alpha-CTD)" evidence="1">
    <location>
        <begin position="248"/>
        <end position="336"/>
    </location>
</feature>
<sequence length="336" mass="37171">MIQKNWQELIKPNKVEFASSGRTKATLVAEPLERGFGLTLGNALRRVLLSSLRGAAVTAVQIDGVLHEFSSIPGVREDVTDIVLNIKEIAIKMDGDDAKRMVVRKQGPGVVTAGDIQTVGDIEILNPNHVICTLDEGAEIRMEFTVNNGKGYVPADRNRSEDAPIGLIPVDSLYSPVKKVSYKVENTREGQVLDYDKLTMSIETDGSVTGEDAIAFAARILQDQLSVFVNFDEPQKETEEEAVTELAFNPALLKKVDELELSVRSANCLKNDNIVYIGDLIQKTEAEMLRTPNFGRKSLNEIKEVLASMGLHLGMEVPSWPPENIEDLAKRYEDQY</sequence>
<comment type="function">
    <text>DNA-dependent RNA polymerase catalyzes the transcription of DNA into RNA using the four ribonucleoside triphosphates as substrates.</text>
</comment>
<comment type="catalytic activity">
    <reaction>
        <text>RNA(n) + a ribonucleoside 5'-triphosphate = RNA(n+1) + diphosphate</text>
        <dbReference type="Rhea" id="RHEA:21248"/>
        <dbReference type="Rhea" id="RHEA-COMP:14527"/>
        <dbReference type="Rhea" id="RHEA-COMP:17342"/>
        <dbReference type="ChEBI" id="CHEBI:33019"/>
        <dbReference type="ChEBI" id="CHEBI:61557"/>
        <dbReference type="ChEBI" id="CHEBI:140395"/>
        <dbReference type="EC" id="2.7.7.6"/>
    </reaction>
</comment>
<comment type="subunit">
    <text evidence="1">Homodimer. The RNAP catalytic core consists of 2 alpha, 1 beta, 1 beta' and 1 omega subunit. When a sigma factor is associated with the core the holoenzyme is formed, which can initiate transcription (By similarity).</text>
</comment>
<comment type="domain">
    <text evidence="1">The alpha-NTD is essential for RNAP assembly and basal transcription, whereas the alpha-CTD is involved in interaction with transcriptional regulators and with upstream promoter elements (By similarity). The alpha-NTD recognizes upstream AT-rich elements and the alpha-CTD interacts with the transcriptional activator Fis in reconstitution assays in E.coli.</text>
</comment>
<comment type="miscellaneous">
    <text>Able to replace the endogenous E.coli protein.</text>
</comment>
<comment type="similarity">
    <text evidence="2">Belongs to the RNA polymerase alpha chain family.</text>
</comment>
<proteinExistence type="evidence at protein level"/>
<accession>Q925Z2</accession>
<reference key="1">
    <citation type="journal article" date="2001" name="Science">
        <title>The composite genome of the legume symbiont Sinorhizobium meliloti.</title>
        <authorList>
            <person name="Galibert F."/>
            <person name="Finan T.M."/>
            <person name="Long S.R."/>
            <person name="Puehler A."/>
            <person name="Abola P."/>
            <person name="Ampe F."/>
            <person name="Barloy-Hubler F."/>
            <person name="Barnett M.J."/>
            <person name="Becker A."/>
            <person name="Boistard P."/>
            <person name="Bothe G."/>
            <person name="Boutry M."/>
            <person name="Bowser L."/>
            <person name="Buhrmester J."/>
            <person name="Cadieu E."/>
            <person name="Capela D."/>
            <person name="Chain P."/>
            <person name="Cowie A."/>
            <person name="Davis R.W."/>
            <person name="Dreano S."/>
            <person name="Federspiel N.A."/>
            <person name="Fisher R.F."/>
            <person name="Gloux S."/>
            <person name="Godrie T."/>
            <person name="Goffeau A."/>
            <person name="Golding B."/>
            <person name="Gouzy J."/>
            <person name="Gurjal M."/>
            <person name="Hernandez-Lucas I."/>
            <person name="Hong A."/>
            <person name="Huizar L."/>
            <person name="Hyman R.W."/>
            <person name="Jones T."/>
            <person name="Kahn D."/>
            <person name="Kahn M.L."/>
            <person name="Kalman S."/>
            <person name="Keating D.H."/>
            <person name="Kiss E."/>
            <person name="Komp C."/>
            <person name="Lelaure V."/>
            <person name="Masuy D."/>
            <person name="Palm C."/>
            <person name="Peck M.C."/>
            <person name="Pohl T.M."/>
            <person name="Portetelle D."/>
            <person name="Purnelle B."/>
            <person name="Ramsperger U."/>
            <person name="Surzycki R."/>
            <person name="Thebault P."/>
            <person name="Vandenbol M."/>
            <person name="Vorhoelter F.J."/>
            <person name="Weidner S."/>
            <person name="Wells D.H."/>
            <person name="Wong K."/>
            <person name="Yeh K.-C."/>
            <person name="Batut J."/>
        </authorList>
    </citation>
    <scope>NUCLEOTIDE SEQUENCE [LARGE SCALE GENOMIC DNA]</scope>
    <source>
        <strain>1021</strain>
    </source>
</reference>
<reference key="2">
    <citation type="journal article" date="2002" name="J. Bacteriol.">
        <title>The RNA polymerase alpha subunit from Sinorhizobium meliloti can assemble with RNA polymerase subunits from Escherichia coli and function in basal and activated transcription both in vivo and in vitro.</title>
        <authorList>
            <person name="Peck M.C."/>
            <person name="Gaal T."/>
            <person name="Fisher R.F."/>
            <person name="Gourse R.L."/>
            <person name="Long S.R."/>
        </authorList>
    </citation>
    <scope>NUCLEOTIDE SEQUENCE [GENOMIC DNA]</scope>
    <scope>CHARACTERIZATION IN E.COLI</scope>
    <source>
        <strain>1021</strain>
    </source>
</reference>
<reference key="3">
    <citation type="journal article" date="2001" name="Proc. Natl. Acad. Sci. U.S.A.">
        <title>Analysis of the chromosome sequence of the legume symbiont Sinorhizobium meliloti strain 1021.</title>
        <authorList>
            <person name="Capela D."/>
            <person name="Barloy-Hubler F."/>
            <person name="Gouzy J."/>
            <person name="Bothe G."/>
            <person name="Ampe F."/>
            <person name="Batut J."/>
            <person name="Boistard P."/>
            <person name="Becker A."/>
            <person name="Boutry M."/>
            <person name="Cadieu E."/>
            <person name="Dreano S."/>
            <person name="Gloux S."/>
            <person name="Godrie T."/>
            <person name="Goffeau A."/>
            <person name="Kahn D."/>
            <person name="Kiss E."/>
            <person name="Lelaure V."/>
            <person name="Masuy D."/>
            <person name="Pohl T."/>
            <person name="Portetelle D."/>
            <person name="Puehler A."/>
            <person name="Purnelle B."/>
            <person name="Ramsperger U."/>
            <person name="Renard C."/>
            <person name="Thebault P."/>
            <person name="Vandenbol M."/>
            <person name="Weidner S."/>
            <person name="Galibert F."/>
        </authorList>
    </citation>
    <scope>NUCLEOTIDE SEQUENCE [LARGE SCALE GENOMIC DNA]</scope>
    <source>
        <strain>1021</strain>
    </source>
</reference>
<name>RPOA_RHIME</name>